<reference key="1">
    <citation type="journal article" date="2008" name="J. Bacteriol.">
        <title>Insights into plant cell wall degradation from the genome sequence of the soil bacterium Cellvibrio japonicus.</title>
        <authorList>
            <person name="DeBoy R.T."/>
            <person name="Mongodin E.F."/>
            <person name="Fouts D.E."/>
            <person name="Tailford L.E."/>
            <person name="Khouri H."/>
            <person name="Emerson J.B."/>
            <person name="Mohamoud Y."/>
            <person name="Watkins K."/>
            <person name="Henrissat B."/>
            <person name="Gilbert H.J."/>
            <person name="Nelson K.E."/>
        </authorList>
    </citation>
    <scope>NUCLEOTIDE SEQUENCE [LARGE SCALE GENOMIC DNA]</scope>
    <source>
        <strain>Ueda107</strain>
    </source>
</reference>
<keyword id="KW-0349">Heme</keyword>
<keyword id="KW-0376">Hydrogen peroxide</keyword>
<keyword id="KW-0408">Iron</keyword>
<keyword id="KW-0479">Metal-binding</keyword>
<keyword id="KW-0560">Oxidoreductase</keyword>
<keyword id="KW-0575">Peroxidase</keyword>
<keyword id="KW-1185">Reference proteome</keyword>
<comment type="function">
    <text evidence="1">Bifunctional enzyme with both catalase and broad-spectrum peroxidase activity.</text>
</comment>
<comment type="catalytic activity">
    <reaction evidence="1">
        <text>H2O2 + AH2 = A + 2 H2O</text>
        <dbReference type="Rhea" id="RHEA:30275"/>
        <dbReference type="ChEBI" id="CHEBI:13193"/>
        <dbReference type="ChEBI" id="CHEBI:15377"/>
        <dbReference type="ChEBI" id="CHEBI:16240"/>
        <dbReference type="ChEBI" id="CHEBI:17499"/>
        <dbReference type="EC" id="1.11.1.21"/>
    </reaction>
</comment>
<comment type="catalytic activity">
    <reaction evidence="1">
        <text>2 H2O2 = O2 + 2 H2O</text>
        <dbReference type="Rhea" id="RHEA:20309"/>
        <dbReference type="ChEBI" id="CHEBI:15377"/>
        <dbReference type="ChEBI" id="CHEBI:15379"/>
        <dbReference type="ChEBI" id="CHEBI:16240"/>
        <dbReference type="EC" id="1.11.1.21"/>
    </reaction>
</comment>
<comment type="cofactor">
    <cofactor evidence="1">
        <name>heme b</name>
        <dbReference type="ChEBI" id="CHEBI:60344"/>
    </cofactor>
    <text evidence="1">Binds 1 heme b (iron(II)-protoporphyrin IX) group per dimer.</text>
</comment>
<comment type="subunit">
    <text evidence="1">Homodimer or homotetramer.</text>
</comment>
<comment type="PTM">
    <text evidence="1">Formation of the three residue Trp-Tyr-Met cross-link is important for the catalase, but not the peroxidase activity of the enzyme.</text>
</comment>
<comment type="similarity">
    <text evidence="1">Belongs to the peroxidase family. Peroxidase/catalase subfamily.</text>
</comment>
<gene>
    <name evidence="1" type="primary">katG1</name>
    <name type="ordered locus">CJA_2891</name>
</gene>
<sequence length="729" mass="80327">MDNNPPTSTGKCPFTHGSVTASGKSNTDWWPNALNLDILHQHDRKTNPLGDDFSYAAAFKTLDLQAVKNDLKALMTDSQDWWPADWGHYGGLFIRMAWHSAGSYRIADGRGGAGTGNQRFAPLNSWPDNGNLDKARRLLWPIKKKYGNKLSWADLMILAGNMAYESMGLKTFGFGGGREDIWHPEKDVYWGSEKEWLAKSGGEGSRYSGERDLENPLAAVMMGLIYVNPEGVDGNPDPLRTAKDIRETFARMAMNDEETVALTAGGHTVGKAHGNGNAANLGPDPEAADVEEQGLGWVNHKTRGIGRDTVTSGIEGAWTTHPTKWDNGYFDMLLNHDWELTKSPAGAWQWKPVSIKEEDMPVDVEDPSIRCTPLMTDADMAMKMDPEYRKISERFYSDPAYFSEVFARAWFKLTHRDLGPKARYLGADVPAEDLIWQDPVPTVDYTLSDADIADLKAKILASGLSVAELVATAWDSARTFRGSDFRGGANGARIRLAPQKDWEGNEPARLQKVLGVFAGIQSGLSKKVSIADLIVVGGAAAVEKAARDAGVNITVPFAPGRGDATDAQTDAESFAPLEPVHDGFRNWVKKDYAVQPEEMLLDRAQLMGLTAPEMTVLVGGMRVLGANYGGSKNGVFTDKVGVLSNDFFVNLTDMAYQWKPTGKNSYNIVERNTGTVKWSATRVDLVFGSNSILRSYAEVYAQDDNREKFVRDFVKAWVKVMNADRFDLK</sequence>
<organism>
    <name type="scientific">Cellvibrio japonicus (strain Ueda107)</name>
    <name type="common">Pseudomonas fluorescens subsp. cellulosa</name>
    <dbReference type="NCBI Taxonomy" id="498211"/>
    <lineage>
        <taxon>Bacteria</taxon>
        <taxon>Pseudomonadati</taxon>
        <taxon>Pseudomonadota</taxon>
        <taxon>Gammaproteobacteria</taxon>
        <taxon>Cellvibrionales</taxon>
        <taxon>Cellvibrionaceae</taxon>
        <taxon>Cellvibrio</taxon>
    </lineage>
</organism>
<protein>
    <recommendedName>
        <fullName evidence="1">Catalase-peroxidase 1</fullName>
        <shortName evidence="1">CP 1</shortName>
        <ecNumber evidence="1">1.11.1.21</ecNumber>
    </recommendedName>
    <alternativeName>
        <fullName evidence="1">Peroxidase/catalase 1</fullName>
    </alternativeName>
</protein>
<proteinExistence type="inferred from homology"/>
<accession>B3PC77</accession>
<name>KATG1_CELJU</name>
<dbReference type="EC" id="1.11.1.21" evidence="1"/>
<dbReference type="EMBL" id="CP000934">
    <property type="protein sequence ID" value="ACE86124.1"/>
    <property type="molecule type" value="Genomic_DNA"/>
</dbReference>
<dbReference type="RefSeq" id="WP_012488475.1">
    <property type="nucleotide sequence ID" value="NC_010995.1"/>
</dbReference>
<dbReference type="SMR" id="B3PC77"/>
<dbReference type="STRING" id="498211.CJA_2891"/>
<dbReference type="KEGG" id="cja:CJA_2891"/>
<dbReference type="eggNOG" id="COG0376">
    <property type="taxonomic scope" value="Bacteria"/>
</dbReference>
<dbReference type="HOGENOM" id="CLU_025424_2_0_6"/>
<dbReference type="OrthoDB" id="9759743at2"/>
<dbReference type="Proteomes" id="UP000001036">
    <property type="component" value="Chromosome"/>
</dbReference>
<dbReference type="GO" id="GO:0005829">
    <property type="term" value="C:cytosol"/>
    <property type="evidence" value="ECO:0007669"/>
    <property type="project" value="TreeGrafter"/>
</dbReference>
<dbReference type="GO" id="GO:0004096">
    <property type="term" value="F:catalase activity"/>
    <property type="evidence" value="ECO:0007669"/>
    <property type="project" value="UniProtKB-UniRule"/>
</dbReference>
<dbReference type="GO" id="GO:0020037">
    <property type="term" value="F:heme binding"/>
    <property type="evidence" value="ECO:0007669"/>
    <property type="project" value="InterPro"/>
</dbReference>
<dbReference type="GO" id="GO:0046872">
    <property type="term" value="F:metal ion binding"/>
    <property type="evidence" value="ECO:0007669"/>
    <property type="project" value="UniProtKB-KW"/>
</dbReference>
<dbReference type="GO" id="GO:0070301">
    <property type="term" value="P:cellular response to hydrogen peroxide"/>
    <property type="evidence" value="ECO:0007669"/>
    <property type="project" value="TreeGrafter"/>
</dbReference>
<dbReference type="GO" id="GO:0042744">
    <property type="term" value="P:hydrogen peroxide catabolic process"/>
    <property type="evidence" value="ECO:0007669"/>
    <property type="project" value="UniProtKB-KW"/>
</dbReference>
<dbReference type="CDD" id="cd00649">
    <property type="entry name" value="catalase_peroxidase_1"/>
    <property type="match status" value="1"/>
</dbReference>
<dbReference type="CDD" id="cd08200">
    <property type="entry name" value="catalase_peroxidase_2"/>
    <property type="match status" value="1"/>
</dbReference>
<dbReference type="FunFam" id="1.10.420.10:FF:000002">
    <property type="entry name" value="Catalase-peroxidase"/>
    <property type="match status" value="1"/>
</dbReference>
<dbReference type="FunFam" id="1.10.420.10:FF:000004">
    <property type="entry name" value="Catalase-peroxidase"/>
    <property type="match status" value="1"/>
</dbReference>
<dbReference type="FunFam" id="1.10.520.10:FF:000002">
    <property type="entry name" value="Catalase-peroxidase"/>
    <property type="match status" value="1"/>
</dbReference>
<dbReference type="Gene3D" id="1.10.520.10">
    <property type="match status" value="2"/>
</dbReference>
<dbReference type="Gene3D" id="1.10.420.10">
    <property type="entry name" value="Peroxidase, domain 2"/>
    <property type="match status" value="2"/>
</dbReference>
<dbReference type="HAMAP" id="MF_01961">
    <property type="entry name" value="Catal_peroxid"/>
    <property type="match status" value="1"/>
</dbReference>
<dbReference type="InterPro" id="IPR000763">
    <property type="entry name" value="Catalase_peroxidase"/>
</dbReference>
<dbReference type="InterPro" id="IPR002016">
    <property type="entry name" value="Haem_peroxidase"/>
</dbReference>
<dbReference type="InterPro" id="IPR010255">
    <property type="entry name" value="Haem_peroxidase_sf"/>
</dbReference>
<dbReference type="InterPro" id="IPR019794">
    <property type="entry name" value="Peroxidases_AS"/>
</dbReference>
<dbReference type="NCBIfam" id="TIGR00198">
    <property type="entry name" value="cat_per_HPI"/>
    <property type="match status" value="1"/>
</dbReference>
<dbReference type="NCBIfam" id="NF011635">
    <property type="entry name" value="PRK15061.1"/>
    <property type="match status" value="1"/>
</dbReference>
<dbReference type="PANTHER" id="PTHR30555:SF6">
    <property type="entry name" value="CATALASE-PEROXIDASE"/>
    <property type="match status" value="1"/>
</dbReference>
<dbReference type="PANTHER" id="PTHR30555">
    <property type="entry name" value="HYDROPEROXIDASE I, BIFUNCTIONAL CATALASE-PEROXIDASE"/>
    <property type="match status" value="1"/>
</dbReference>
<dbReference type="Pfam" id="PF00141">
    <property type="entry name" value="peroxidase"/>
    <property type="match status" value="2"/>
</dbReference>
<dbReference type="PRINTS" id="PR00460">
    <property type="entry name" value="BPEROXIDASE"/>
</dbReference>
<dbReference type="PRINTS" id="PR00458">
    <property type="entry name" value="PEROXIDASE"/>
</dbReference>
<dbReference type="SUPFAM" id="SSF48113">
    <property type="entry name" value="Heme-dependent peroxidases"/>
    <property type="match status" value="2"/>
</dbReference>
<dbReference type="PROSITE" id="PS00436">
    <property type="entry name" value="PEROXIDASE_2"/>
    <property type="match status" value="1"/>
</dbReference>
<dbReference type="PROSITE" id="PS50873">
    <property type="entry name" value="PEROXIDASE_4"/>
    <property type="match status" value="1"/>
</dbReference>
<feature type="chain" id="PRO_0000354755" description="Catalase-peroxidase 1">
    <location>
        <begin position="1"/>
        <end position="729"/>
    </location>
</feature>
<feature type="active site" description="Proton acceptor" evidence="1">
    <location>
        <position position="99"/>
    </location>
</feature>
<feature type="binding site" description="axial binding residue" evidence="1">
    <location>
        <position position="267"/>
    </location>
    <ligand>
        <name>heme b</name>
        <dbReference type="ChEBI" id="CHEBI:60344"/>
    </ligand>
    <ligandPart>
        <name>Fe</name>
        <dbReference type="ChEBI" id="CHEBI:18248"/>
    </ligandPart>
</feature>
<feature type="site" description="Transition state stabilizer" evidence="1">
    <location>
        <position position="95"/>
    </location>
</feature>
<feature type="cross-link" description="Tryptophyl-tyrosyl-methioninium (Trp-Tyr) (with M-252)" evidence="1">
    <location>
        <begin position="98"/>
        <end position="226"/>
    </location>
</feature>
<feature type="cross-link" description="Tryptophyl-tyrosyl-methioninium (Tyr-Met) (with W-98)" evidence="1">
    <location>
        <begin position="226"/>
        <end position="252"/>
    </location>
</feature>
<evidence type="ECO:0000255" key="1">
    <source>
        <dbReference type="HAMAP-Rule" id="MF_01961"/>
    </source>
</evidence>